<accession>A8GT47</accession>
<name>RS13_RICRS</name>
<keyword id="KW-0687">Ribonucleoprotein</keyword>
<keyword id="KW-0689">Ribosomal protein</keyword>
<keyword id="KW-0694">RNA-binding</keyword>
<keyword id="KW-0699">rRNA-binding</keyword>
<keyword id="KW-0820">tRNA-binding</keyword>
<evidence type="ECO:0000255" key="1">
    <source>
        <dbReference type="HAMAP-Rule" id="MF_01315"/>
    </source>
</evidence>
<evidence type="ECO:0000305" key="2"/>
<proteinExistence type="inferred from homology"/>
<gene>
    <name evidence="1" type="primary">rpsM</name>
    <name type="ordered locus">A1G_05445</name>
</gene>
<sequence length="125" mass="14112">MARIASVNIPDNKRVVVSLTYIYGLGPTMAAEICNKAKISKDKKVKELTDQELIGLRNIIESEYKVEGDLRREVTLNIKKKKDIRCYQGLRHIRKLPVRGQNTHSNARTRKGKAIAIAGKKKAVK</sequence>
<dbReference type="EMBL" id="CP000848">
    <property type="protein sequence ID" value="ABV76572.1"/>
    <property type="molecule type" value="Genomic_DNA"/>
</dbReference>
<dbReference type="RefSeq" id="WP_012151135.1">
    <property type="nucleotide sequence ID" value="NZ_CP121767.1"/>
</dbReference>
<dbReference type="SMR" id="A8GT47"/>
<dbReference type="GeneID" id="79937648"/>
<dbReference type="KEGG" id="rri:A1G_05445"/>
<dbReference type="HOGENOM" id="CLU_103849_1_2_5"/>
<dbReference type="Proteomes" id="UP000006832">
    <property type="component" value="Chromosome"/>
</dbReference>
<dbReference type="GO" id="GO:0005829">
    <property type="term" value="C:cytosol"/>
    <property type="evidence" value="ECO:0007669"/>
    <property type="project" value="TreeGrafter"/>
</dbReference>
<dbReference type="GO" id="GO:0015935">
    <property type="term" value="C:small ribosomal subunit"/>
    <property type="evidence" value="ECO:0007669"/>
    <property type="project" value="TreeGrafter"/>
</dbReference>
<dbReference type="GO" id="GO:0019843">
    <property type="term" value="F:rRNA binding"/>
    <property type="evidence" value="ECO:0007669"/>
    <property type="project" value="UniProtKB-UniRule"/>
</dbReference>
<dbReference type="GO" id="GO:0003735">
    <property type="term" value="F:structural constituent of ribosome"/>
    <property type="evidence" value="ECO:0007669"/>
    <property type="project" value="InterPro"/>
</dbReference>
<dbReference type="GO" id="GO:0000049">
    <property type="term" value="F:tRNA binding"/>
    <property type="evidence" value="ECO:0007669"/>
    <property type="project" value="UniProtKB-UniRule"/>
</dbReference>
<dbReference type="GO" id="GO:0006412">
    <property type="term" value="P:translation"/>
    <property type="evidence" value="ECO:0007669"/>
    <property type="project" value="UniProtKB-UniRule"/>
</dbReference>
<dbReference type="FunFam" id="1.10.8.50:FF:000001">
    <property type="entry name" value="30S ribosomal protein S13"/>
    <property type="match status" value="1"/>
</dbReference>
<dbReference type="Gene3D" id="1.10.8.50">
    <property type="match status" value="1"/>
</dbReference>
<dbReference type="Gene3D" id="4.10.910.10">
    <property type="entry name" value="30s ribosomal protein s13, domain 2"/>
    <property type="match status" value="1"/>
</dbReference>
<dbReference type="HAMAP" id="MF_01315">
    <property type="entry name" value="Ribosomal_uS13"/>
    <property type="match status" value="1"/>
</dbReference>
<dbReference type="InterPro" id="IPR027437">
    <property type="entry name" value="Rbsml_uS13_C"/>
</dbReference>
<dbReference type="InterPro" id="IPR001892">
    <property type="entry name" value="Ribosomal_uS13"/>
</dbReference>
<dbReference type="InterPro" id="IPR010979">
    <property type="entry name" value="Ribosomal_uS13-like_H2TH"/>
</dbReference>
<dbReference type="InterPro" id="IPR019980">
    <property type="entry name" value="Ribosomal_uS13_bac-type"/>
</dbReference>
<dbReference type="InterPro" id="IPR018269">
    <property type="entry name" value="Ribosomal_uS13_CS"/>
</dbReference>
<dbReference type="NCBIfam" id="TIGR03631">
    <property type="entry name" value="uS13_bact"/>
    <property type="match status" value="1"/>
</dbReference>
<dbReference type="PANTHER" id="PTHR10871">
    <property type="entry name" value="30S RIBOSOMAL PROTEIN S13/40S RIBOSOMAL PROTEIN S18"/>
    <property type="match status" value="1"/>
</dbReference>
<dbReference type="PANTHER" id="PTHR10871:SF1">
    <property type="entry name" value="SMALL RIBOSOMAL SUBUNIT PROTEIN US13M"/>
    <property type="match status" value="1"/>
</dbReference>
<dbReference type="Pfam" id="PF00416">
    <property type="entry name" value="Ribosomal_S13"/>
    <property type="match status" value="1"/>
</dbReference>
<dbReference type="PIRSF" id="PIRSF002134">
    <property type="entry name" value="Ribosomal_S13"/>
    <property type="match status" value="1"/>
</dbReference>
<dbReference type="SUPFAM" id="SSF46946">
    <property type="entry name" value="S13-like H2TH domain"/>
    <property type="match status" value="1"/>
</dbReference>
<dbReference type="PROSITE" id="PS00646">
    <property type="entry name" value="RIBOSOMAL_S13_1"/>
    <property type="match status" value="1"/>
</dbReference>
<dbReference type="PROSITE" id="PS50159">
    <property type="entry name" value="RIBOSOMAL_S13_2"/>
    <property type="match status" value="1"/>
</dbReference>
<organism>
    <name type="scientific">Rickettsia rickettsii (strain Sheila Smith)</name>
    <dbReference type="NCBI Taxonomy" id="392021"/>
    <lineage>
        <taxon>Bacteria</taxon>
        <taxon>Pseudomonadati</taxon>
        <taxon>Pseudomonadota</taxon>
        <taxon>Alphaproteobacteria</taxon>
        <taxon>Rickettsiales</taxon>
        <taxon>Rickettsiaceae</taxon>
        <taxon>Rickettsieae</taxon>
        <taxon>Rickettsia</taxon>
        <taxon>spotted fever group</taxon>
    </lineage>
</organism>
<protein>
    <recommendedName>
        <fullName evidence="1">Small ribosomal subunit protein uS13</fullName>
    </recommendedName>
    <alternativeName>
        <fullName evidence="2">30S ribosomal protein S13</fullName>
    </alternativeName>
</protein>
<feature type="chain" id="PRO_1000051889" description="Small ribosomal subunit protein uS13">
    <location>
        <begin position="1"/>
        <end position="125"/>
    </location>
</feature>
<comment type="function">
    <text evidence="1">Located at the top of the head of the 30S subunit, it contacts several helices of the 16S rRNA. In the 70S ribosome it contacts the 23S rRNA (bridge B1a) and protein L5 of the 50S subunit (bridge B1b), connecting the 2 subunits; these bridges are implicated in subunit movement. Contacts the tRNAs in the A and P-sites.</text>
</comment>
<comment type="subunit">
    <text evidence="1">Part of the 30S ribosomal subunit. Forms a loose heterodimer with protein S19. Forms two bridges to the 50S subunit in the 70S ribosome.</text>
</comment>
<comment type="similarity">
    <text evidence="1">Belongs to the universal ribosomal protein uS13 family.</text>
</comment>
<reference key="1">
    <citation type="submission" date="2007-09" db="EMBL/GenBank/DDBJ databases">
        <title>Complete genome sequence of Rickettsia rickettsii.</title>
        <authorList>
            <person name="Madan A."/>
            <person name="Fahey J."/>
            <person name="Helton E."/>
            <person name="Ketteman M."/>
            <person name="Madan A."/>
            <person name="Rodrigues S."/>
            <person name="Sanchez A."/>
            <person name="Dasch G."/>
            <person name="Eremeeva M."/>
        </authorList>
    </citation>
    <scope>NUCLEOTIDE SEQUENCE [LARGE SCALE GENOMIC DNA]</scope>
    <source>
        <strain>Sheila Smith</strain>
    </source>
</reference>